<organism>
    <name type="scientific">Derocalymma cruralis</name>
    <name type="common">African cockroach</name>
    <dbReference type="NCBI Taxonomy" id="344972"/>
    <lineage>
        <taxon>Eukaryota</taxon>
        <taxon>Metazoa</taxon>
        <taxon>Ecdysozoa</taxon>
        <taxon>Arthropoda</taxon>
        <taxon>Hexapoda</taxon>
        <taxon>Insecta</taxon>
        <taxon>Pterygota</taxon>
        <taxon>Neoptera</taxon>
        <taxon>Polyneoptera</taxon>
        <taxon>Dictyoptera</taxon>
        <taxon>Blattodea</taxon>
        <taxon>Blaberoidea</taxon>
        <taxon>Blaberidae</taxon>
        <taxon>Perisphaerinae</taxon>
        <taxon>Derocalymma</taxon>
    </lineage>
</organism>
<dbReference type="GO" id="GO:0005576">
    <property type="term" value="C:extracellular region"/>
    <property type="evidence" value="ECO:0007669"/>
    <property type="project" value="UniProtKB-SubCell"/>
</dbReference>
<dbReference type="GO" id="GO:0007218">
    <property type="term" value="P:neuropeptide signaling pathway"/>
    <property type="evidence" value="ECO:0007669"/>
    <property type="project" value="UniProtKB-KW"/>
</dbReference>
<dbReference type="InterPro" id="IPR013231">
    <property type="entry name" value="Periviscerokinin"/>
</dbReference>
<dbReference type="Pfam" id="PF08259">
    <property type="entry name" value="Periviscerokin"/>
    <property type="match status" value="1"/>
</dbReference>
<accession>P85580</accession>
<keyword id="KW-0027">Amidation</keyword>
<keyword id="KW-0903">Direct protein sequencing</keyword>
<keyword id="KW-0527">Neuropeptide</keyword>
<keyword id="KW-0964">Secreted</keyword>
<protein>
    <recommendedName>
        <fullName evidence="3">Periviscerokinin-1</fullName>
        <shortName evidence="3">DerCr-PVK-1</shortName>
    </recommendedName>
</protein>
<proteinExistence type="evidence at protein level"/>
<reference evidence="4" key="1">
    <citation type="journal article" date="2009" name="BMC Evol. Biol.">
        <title>A proteomic approach for studying insect phylogeny: CAPA peptides of ancient insect taxa (Dictyoptera, Blattoptera) as a test case.</title>
        <authorList>
            <person name="Roth S."/>
            <person name="Fromm B."/>
            <person name="Gaede G."/>
            <person name="Predel R."/>
        </authorList>
    </citation>
    <scope>PROTEIN SEQUENCE</scope>
    <scope>AMIDATION AT THR-12</scope>
    <source>
        <tissue evidence="2">Abdominal perisympathetic organs</tissue>
    </source>
</reference>
<evidence type="ECO:0000255" key="1"/>
<evidence type="ECO:0000269" key="2">
    <source>
    </source>
</evidence>
<evidence type="ECO:0000303" key="3">
    <source>
    </source>
</evidence>
<evidence type="ECO:0000305" key="4"/>
<feature type="peptide" id="PRO_0000378734" description="Periviscerokinin-1" evidence="2">
    <location>
        <begin position="1"/>
        <end position="12"/>
    </location>
</feature>
<feature type="modified residue" description="Threonine amide" evidence="2">
    <location>
        <position position="12"/>
    </location>
</feature>
<sequence length="12" mass="1152">GSSGGLITFGRT</sequence>
<name>PVK1_DERCR</name>
<comment type="function">
    <text evidence="4">Mediates visceral muscle contractile activity (myotropic activity).</text>
</comment>
<comment type="subcellular location">
    <subcellularLocation>
        <location evidence="4">Secreted</location>
    </subcellularLocation>
</comment>
<comment type="similarity">
    <text evidence="1">Belongs to the periviscerokinin family.</text>
</comment>